<reference key="1">
    <citation type="journal article" date="2000" name="Nature">
        <title>Genome sequence of the endocellular bacterial symbiont of aphids Buchnera sp. APS.</title>
        <authorList>
            <person name="Shigenobu S."/>
            <person name="Watanabe H."/>
            <person name="Hattori M."/>
            <person name="Sakaki Y."/>
            <person name="Ishikawa H."/>
        </authorList>
    </citation>
    <scope>NUCLEOTIDE SEQUENCE [LARGE SCALE GENOMIC DNA]</scope>
    <source>
        <strain>APS</strain>
    </source>
</reference>
<reference key="2">
    <citation type="journal article" date="2000" name="J. Bacteriol.">
        <title>Prephenate dehydratase from the aphid endosymbiont (Buchnera) displays changes in the regulatory domain that suggest its desensitization to inhibition by phenylalanine.</title>
        <authorList>
            <person name="Jimenez N."/>
            <person name="Gonzalez-Candelas F."/>
            <person name="Silva F.J."/>
        </authorList>
    </citation>
    <scope>NUCLEOTIDE SEQUENCE [GENOMIC DNA] OF 1-28</scope>
</reference>
<gene>
    <name evidence="1" type="primary">rpsP</name>
    <name type="ordered locus">BU394</name>
</gene>
<feature type="chain" id="PRO_0000167163" description="Small ribosomal subunit protein bS16">
    <location>
        <begin position="1"/>
        <end position="79"/>
    </location>
</feature>
<sequence>MVKIRLARYGTKKRPFYKLVVADSRFSRNGRFIERLGYFNPIAKGKSEILKLNLERIEHWTNQGAQMSERTKKLIKQKR</sequence>
<proteinExistence type="inferred from homology"/>
<evidence type="ECO:0000255" key="1">
    <source>
        <dbReference type="HAMAP-Rule" id="MF_00385"/>
    </source>
</evidence>
<evidence type="ECO:0000305" key="2"/>
<accession>P57474</accession>
<accession>Q9L4J0</accession>
<keyword id="KW-1185">Reference proteome</keyword>
<keyword id="KW-0687">Ribonucleoprotein</keyword>
<keyword id="KW-0689">Ribosomal protein</keyword>
<comment type="similarity">
    <text evidence="1">Belongs to the bacterial ribosomal protein bS16 family.</text>
</comment>
<dbReference type="EMBL" id="BA000003">
    <property type="protein sequence ID" value="BAB13097.1"/>
    <property type="molecule type" value="Genomic_DNA"/>
</dbReference>
<dbReference type="EMBL" id="AJ239043">
    <property type="protein sequence ID" value="CAB90998.1"/>
    <property type="molecule type" value="Genomic_DNA"/>
</dbReference>
<dbReference type="RefSeq" id="NP_240211.1">
    <property type="nucleotide sequence ID" value="NC_002528.1"/>
</dbReference>
<dbReference type="RefSeq" id="WP_009874351.1">
    <property type="nucleotide sequence ID" value="NZ_AP036055.1"/>
</dbReference>
<dbReference type="SMR" id="P57474"/>
<dbReference type="STRING" id="563178.BUAP5A_387"/>
<dbReference type="EnsemblBacteria" id="BAB13097">
    <property type="protein sequence ID" value="BAB13097"/>
    <property type="gene ID" value="BAB13097"/>
</dbReference>
<dbReference type="KEGG" id="buc:BU394"/>
<dbReference type="PATRIC" id="fig|107806.10.peg.408"/>
<dbReference type="eggNOG" id="COG0228">
    <property type="taxonomic scope" value="Bacteria"/>
</dbReference>
<dbReference type="HOGENOM" id="CLU_100590_5_1_6"/>
<dbReference type="Proteomes" id="UP000001806">
    <property type="component" value="Chromosome"/>
</dbReference>
<dbReference type="GO" id="GO:0005737">
    <property type="term" value="C:cytoplasm"/>
    <property type="evidence" value="ECO:0007669"/>
    <property type="project" value="UniProtKB-ARBA"/>
</dbReference>
<dbReference type="GO" id="GO:0015935">
    <property type="term" value="C:small ribosomal subunit"/>
    <property type="evidence" value="ECO:0007669"/>
    <property type="project" value="TreeGrafter"/>
</dbReference>
<dbReference type="GO" id="GO:0003735">
    <property type="term" value="F:structural constituent of ribosome"/>
    <property type="evidence" value="ECO:0007669"/>
    <property type="project" value="InterPro"/>
</dbReference>
<dbReference type="GO" id="GO:0006412">
    <property type="term" value="P:translation"/>
    <property type="evidence" value="ECO:0007669"/>
    <property type="project" value="UniProtKB-UniRule"/>
</dbReference>
<dbReference type="Gene3D" id="3.30.1320.10">
    <property type="match status" value="1"/>
</dbReference>
<dbReference type="HAMAP" id="MF_00385">
    <property type="entry name" value="Ribosomal_bS16"/>
    <property type="match status" value="1"/>
</dbReference>
<dbReference type="InterPro" id="IPR000307">
    <property type="entry name" value="Ribosomal_bS16"/>
</dbReference>
<dbReference type="InterPro" id="IPR023803">
    <property type="entry name" value="Ribosomal_bS16_dom_sf"/>
</dbReference>
<dbReference type="NCBIfam" id="TIGR00002">
    <property type="entry name" value="S16"/>
    <property type="match status" value="1"/>
</dbReference>
<dbReference type="PANTHER" id="PTHR12919">
    <property type="entry name" value="30S RIBOSOMAL PROTEIN S16"/>
    <property type="match status" value="1"/>
</dbReference>
<dbReference type="PANTHER" id="PTHR12919:SF20">
    <property type="entry name" value="SMALL RIBOSOMAL SUBUNIT PROTEIN BS16M"/>
    <property type="match status" value="1"/>
</dbReference>
<dbReference type="Pfam" id="PF00886">
    <property type="entry name" value="Ribosomal_S16"/>
    <property type="match status" value="1"/>
</dbReference>
<dbReference type="SUPFAM" id="SSF54565">
    <property type="entry name" value="Ribosomal protein S16"/>
    <property type="match status" value="1"/>
</dbReference>
<name>RS16_BUCAI</name>
<protein>
    <recommendedName>
        <fullName evidence="1">Small ribosomal subunit protein bS16</fullName>
    </recommendedName>
    <alternativeName>
        <fullName evidence="2">30S ribosomal protein S16</fullName>
    </alternativeName>
</protein>
<organism>
    <name type="scientific">Buchnera aphidicola subsp. Acyrthosiphon pisum (strain APS)</name>
    <name type="common">Acyrthosiphon pisum symbiotic bacterium</name>
    <dbReference type="NCBI Taxonomy" id="107806"/>
    <lineage>
        <taxon>Bacteria</taxon>
        <taxon>Pseudomonadati</taxon>
        <taxon>Pseudomonadota</taxon>
        <taxon>Gammaproteobacteria</taxon>
        <taxon>Enterobacterales</taxon>
        <taxon>Erwiniaceae</taxon>
        <taxon>Buchnera</taxon>
    </lineage>
</organism>